<name>CYC_ASTRU</name>
<protein>
    <recommendedName>
        <fullName>Cytochrome c</fullName>
    </recommendedName>
</protein>
<feature type="initiator methionine" description="Removed" evidence="1">
    <location>
        <position position="1"/>
    </location>
</feature>
<feature type="chain" id="PRO_0000108270" description="Cytochrome c">
    <location>
        <begin position="2"/>
        <end position="104"/>
    </location>
</feature>
<feature type="binding site" description="covalent">
    <location>
        <position position="15"/>
    </location>
    <ligand>
        <name>heme c</name>
        <dbReference type="ChEBI" id="CHEBI:61717"/>
    </ligand>
</feature>
<feature type="binding site" description="covalent">
    <location>
        <position position="18"/>
    </location>
    <ligand>
        <name>heme c</name>
        <dbReference type="ChEBI" id="CHEBI:61717"/>
    </ligand>
</feature>
<feature type="binding site" description="axial binding residue">
    <location>
        <position position="19"/>
    </location>
    <ligand>
        <name>heme c</name>
        <dbReference type="ChEBI" id="CHEBI:61717"/>
    </ligand>
    <ligandPart>
        <name>Fe</name>
        <dbReference type="ChEBI" id="CHEBI:18248"/>
    </ligandPart>
</feature>
<feature type="binding site" description="axial binding residue">
    <location>
        <position position="81"/>
    </location>
    <ligand>
        <name>heme c</name>
        <dbReference type="ChEBI" id="CHEBI:61717"/>
    </ligand>
    <ligandPart>
        <name>Fe</name>
        <dbReference type="ChEBI" id="CHEBI:18248"/>
    </ligandPart>
</feature>
<accession>P00029</accession>
<dbReference type="PIR" id="A00026">
    <property type="entry name" value="CCSF"/>
</dbReference>
<dbReference type="SMR" id="P00029"/>
<dbReference type="OrthoDB" id="283091at2759"/>
<dbReference type="GO" id="GO:0005758">
    <property type="term" value="C:mitochondrial intermembrane space"/>
    <property type="evidence" value="ECO:0007669"/>
    <property type="project" value="UniProtKB-SubCell"/>
</dbReference>
<dbReference type="GO" id="GO:0009055">
    <property type="term" value="F:electron transfer activity"/>
    <property type="evidence" value="ECO:0007669"/>
    <property type="project" value="InterPro"/>
</dbReference>
<dbReference type="GO" id="GO:0020037">
    <property type="term" value="F:heme binding"/>
    <property type="evidence" value="ECO:0007669"/>
    <property type="project" value="InterPro"/>
</dbReference>
<dbReference type="GO" id="GO:0046872">
    <property type="term" value="F:metal ion binding"/>
    <property type="evidence" value="ECO:0007669"/>
    <property type="project" value="UniProtKB-KW"/>
</dbReference>
<dbReference type="FunFam" id="1.10.760.10:FF:000001">
    <property type="entry name" value="Cytochrome c iso-1"/>
    <property type="match status" value="1"/>
</dbReference>
<dbReference type="Gene3D" id="1.10.760.10">
    <property type="entry name" value="Cytochrome c-like domain"/>
    <property type="match status" value="1"/>
</dbReference>
<dbReference type="InterPro" id="IPR009056">
    <property type="entry name" value="Cyt_c-like_dom"/>
</dbReference>
<dbReference type="InterPro" id="IPR036909">
    <property type="entry name" value="Cyt_c-like_dom_sf"/>
</dbReference>
<dbReference type="InterPro" id="IPR002327">
    <property type="entry name" value="Cyt_c_1A/1B"/>
</dbReference>
<dbReference type="PANTHER" id="PTHR11961">
    <property type="entry name" value="CYTOCHROME C"/>
    <property type="match status" value="1"/>
</dbReference>
<dbReference type="Pfam" id="PF00034">
    <property type="entry name" value="Cytochrom_C"/>
    <property type="match status" value="1"/>
</dbReference>
<dbReference type="PRINTS" id="PR00604">
    <property type="entry name" value="CYTCHRMECIAB"/>
</dbReference>
<dbReference type="SUPFAM" id="SSF46626">
    <property type="entry name" value="Cytochrome c"/>
    <property type="match status" value="1"/>
</dbReference>
<dbReference type="PROSITE" id="PS51007">
    <property type="entry name" value="CYTC"/>
    <property type="match status" value="1"/>
</dbReference>
<comment type="function">
    <text>Electron carrier protein. The oxidized form of the cytochrome c heme group can accept an electron from the heme group of the cytochrome c1 subunit of cytochrome reductase. Cytochrome c then transfers this electron to the cytochrome oxidase complex, the final protein carrier in the mitochondrial electron-transport chain.</text>
</comment>
<comment type="subcellular location">
    <subcellularLocation>
        <location>Mitochondrion intermembrane space</location>
    </subcellularLocation>
    <text>Loosely associated with the inner membrane.</text>
</comment>
<comment type="PTM">
    <text>Binds 1 c group covalently group per subunit.</text>
</comment>
<comment type="similarity">
    <text evidence="2">Belongs to the cytochrome c family.</text>
</comment>
<comment type="online information" name="Protein Spotlight">
    <link uri="https://www.proteinspotlight.org/back_issues/076"/>
    <text>Life shuttle - Issue 76 of November 2006</text>
</comment>
<proteinExistence type="evidence at protein level"/>
<evidence type="ECO:0000269" key="1">
    <source>
    </source>
</evidence>
<evidence type="ECO:0000305" key="2"/>
<sequence>MGQVEKGKKIFVQRCAQCHTVEKAGKHKTGPNLNGILGRKTGQAAGFSYTDANRNKGITWKNETLFEYLENPKKYIPGTKMVFAGLKKQKERQDLIAYLEAATK</sequence>
<keyword id="KW-0903">Direct protein sequencing</keyword>
<keyword id="KW-0249">Electron transport</keyword>
<keyword id="KW-0349">Heme</keyword>
<keyword id="KW-0408">Iron</keyword>
<keyword id="KW-0479">Metal-binding</keyword>
<keyword id="KW-0496">Mitochondrion</keyword>
<keyword id="KW-0679">Respiratory chain</keyword>
<keyword id="KW-0813">Transport</keyword>
<organism>
    <name type="scientific">Asterias rubens</name>
    <name type="common">Common European starfish</name>
    <name type="synonym">Asterias vulgaris</name>
    <dbReference type="NCBI Taxonomy" id="7604"/>
    <lineage>
        <taxon>Eukaryota</taxon>
        <taxon>Metazoa</taxon>
        <taxon>Echinodermata</taxon>
        <taxon>Eleutherozoa</taxon>
        <taxon>Asterozoa</taxon>
        <taxon>Asteroidea</taxon>
        <taxon>Forcipulatacea</taxon>
        <taxon>Forcipulatida</taxon>
        <taxon>Asteriidae</taxon>
        <taxon>Asterias</taxon>
    </lineage>
</organism>
<reference key="1">
    <citation type="journal article" date="1976" name="FEBS Lett.">
        <title>The amino acid sequence of cytochrome c from Asterias rubens L. (common starfish).</title>
        <authorList>
            <person name="Lyddiatt A."/>
            <person name="Boulter D."/>
        </authorList>
    </citation>
    <scope>PROTEIN SEQUENCE OF 2-104</scope>
</reference>